<dbReference type="EMBL" id="AC093560">
    <property type="status" value="NOT_ANNOTATED_CDS"/>
    <property type="molecule type" value="Genomic_DNA"/>
</dbReference>
<dbReference type="EMBL" id="AL590547">
    <property type="status" value="NOT_ANNOTATED_CDS"/>
    <property type="molecule type" value="Genomic_DNA"/>
</dbReference>
<dbReference type="EMBL" id="AL596134">
    <property type="status" value="NOT_ANNOTATED_CDS"/>
    <property type="molecule type" value="Genomic_DNA"/>
</dbReference>
<dbReference type="EMBL" id="AL645769">
    <property type="status" value="NOT_ANNOTATED_CDS"/>
    <property type="molecule type" value="Genomic_DNA"/>
</dbReference>
<dbReference type="EMBL" id="AC092811">
    <property type="status" value="NOT_ANNOTATED_CDS"/>
    <property type="molecule type" value="Genomic_DNA"/>
</dbReference>
<dbReference type="EMBL" id="AL162738">
    <property type="status" value="NOT_ANNOTATED_CDS"/>
    <property type="molecule type" value="Genomic_DNA"/>
</dbReference>
<dbReference type="EMBL" id="AL357912">
    <property type="status" value="NOT_ANNOTATED_CDS"/>
    <property type="molecule type" value="Genomic_DNA"/>
</dbReference>
<dbReference type="EMBL" id="CH471098">
    <property type="protein sequence ID" value="EAW69735.1"/>
    <property type="status" value="ALT_SEQ"/>
    <property type="molecule type" value="Genomic_DNA"/>
</dbReference>
<dbReference type="EMBL" id="BC119716">
    <property type="protein sequence ID" value="AAI19717.1"/>
    <property type="status" value="ALT_INIT"/>
    <property type="molecule type" value="mRNA"/>
</dbReference>
<dbReference type="EMBL" id="BC119717">
    <property type="protein sequence ID" value="AAI19718.1"/>
    <property type="status" value="ALT_INIT"/>
    <property type="molecule type" value="mRNA"/>
</dbReference>
<dbReference type="CCDS" id="CCDS41472.1">
    <molecule id="Q0VDD8-3"/>
</dbReference>
<dbReference type="CCDS" id="CCDS44322.1">
    <molecule id="Q0VDD8-2"/>
</dbReference>
<dbReference type="RefSeq" id="NP_001138626.1">
    <molecule id="Q0VDD8-2"/>
    <property type="nucleotide sequence ID" value="NM_001145154.3"/>
</dbReference>
<dbReference type="RefSeq" id="NP_001364.1">
    <property type="nucleotide sequence ID" value="NM_001373.1"/>
</dbReference>
<dbReference type="RefSeq" id="NP_659426.2">
    <molecule id="Q0VDD8-3"/>
    <property type="nucleotide sequence ID" value="NM_144989.2"/>
</dbReference>
<dbReference type="SMR" id="Q0VDD8"/>
<dbReference type="BioGRID" id="126070">
    <property type="interactions" value="31"/>
</dbReference>
<dbReference type="FunCoup" id="Q0VDD8">
    <property type="interactions" value="218"/>
</dbReference>
<dbReference type="IntAct" id="Q0VDD8">
    <property type="interactions" value="21"/>
</dbReference>
<dbReference type="GlyCosmos" id="Q0VDD8">
    <property type="glycosylation" value="1 site, No reported glycans"/>
</dbReference>
<dbReference type="GlyGen" id="Q0VDD8">
    <property type="glycosylation" value="5 sites, 1 N-linked glycan (1 site), 1 O-linked glycan (2 sites)"/>
</dbReference>
<dbReference type="iPTMnet" id="Q0VDD8"/>
<dbReference type="PhosphoSitePlus" id="Q0VDD8"/>
<dbReference type="SwissPalm" id="Q0VDD8"/>
<dbReference type="BioMuta" id="DNAH14"/>
<dbReference type="DMDM" id="172046085"/>
<dbReference type="jPOST" id="Q0VDD8"/>
<dbReference type="MassIVE" id="Q0VDD8"/>
<dbReference type="PeptideAtlas" id="Q0VDD8"/>
<dbReference type="ProteomicsDB" id="58820">
    <molecule id="Q0VDD8-1"/>
</dbReference>
<dbReference type="ProteomicsDB" id="58821">
    <molecule id="Q0VDD8-2"/>
</dbReference>
<dbReference type="ProteomicsDB" id="58823">
    <molecule id="Q0VDD8-4"/>
</dbReference>
<dbReference type="Pumba" id="Q0VDD8"/>
<dbReference type="Antibodypedia" id="34641">
    <property type="antibodies" value="75 antibodies from 14 providers"/>
</dbReference>
<dbReference type="DNASU" id="127602"/>
<dbReference type="Ensembl" id="ENST00000366848.5">
    <molecule id="Q0VDD8-3"/>
    <property type="protein sequence ID" value="ENSP00000355813.1"/>
    <property type="gene ID" value="ENSG00000185842.16"/>
</dbReference>
<dbReference type="Ensembl" id="ENST00000366850.7">
    <molecule id="Q0VDD8-3"/>
    <property type="protein sequence ID" value="ENSP00000355815.3"/>
    <property type="gene ID" value="ENSG00000185842.16"/>
</dbReference>
<dbReference type="Ensembl" id="ENST00000400952.7">
    <molecule id="Q0VDD8-2"/>
    <property type="protein sequence ID" value="ENSP00000383737.3"/>
    <property type="gene ID" value="ENSG00000185842.16"/>
</dbReference>
<dbReference type="Ensembl" id="ENST00000430092.5">
    <molecule id="Q0VDD8-4"/>
    <property type="protein sequence ID" value="ENSP00000414402.1"/>
    <property type="gene ID" value="ENSG00000185842.16"/>
</dbReference>
<dbReference type="Ensembl" id="ENST00000439375.6">
    <molecule id="Q0VDD8-4"/>
    <property type="protein sequence ID" value="ENSP00000392061.2"/>
    <property type="gene ID" value="ENSG00000185842.16"/>
</dbReference>
<dbReference type="Ensembl" id="ENST00000445597.6">
    <molecule id="Q0VDD8-1"/>
    <property type="protein sequence ID" value="ENSP00000409472.2"/>
    <property type="gene ID" value="ENSG00000185842.16"/>
</dbReference>
<dbReference type="GeneID" id="127602"/>
<dbReference type="KEGG" id="hsa:127602"/>
<dbReference type="UCSC" id="uc001hou.5">
    <molecule id="Q0VDD8-1"/>
    <property type="organism name" value="human"/>
</dbReference>
<dbReference type="AGR" id="HGNC:2945"/>
<dbReference type="CTD" id="127602"/>
<dbReference type="DisGeNET" id="127602"/>
<dbReference type="GeneCards" id="DNAH14"/>
<dbReference type="HGNC" id="HGNC:2945">
    <property type="gene designation" value="DNAH14"/>
</dbReference>
<dbReference type="HPA" id="ENSG00000185842">
    <property type="expression patterns" value="Tissue enhanced (testis)"/>
</dbReference>
<dbReference type="MalaCards" id="DNAH14"/>
<dbReference type="MIM" id="603341">
    <property type="type" value="gene"/>
</dbReference>
<dbReference type="neXtProt" id="NX_Q0VDD8"/>
<dbReference type="OpenTargets" id="ENSG00000185842"/>
<dbReference type="PharmGKB" id="PA27399"/>
<dbReference type="VEuPathDB" id="HostDB:ENSG00000185842"/>
<dbReference type="GeneTree" id="ENSGT00940000160505"/>
<dbReference type="HOGENOM" id="CLU_000038_6_0_1"/>
<dbReference type="InParanoid" id="Q0VDD8"/>
<dbReference type="OMA" id="PHLMKCF"/>
<dbReference type="OrthoDB" id="424310at2759"/>
<dbReference type="PAN-GO" id="Q0VDD8">
    <property type="GO annotations" value="5 GO annotations based on evolutionary models"/>
</dbReference>
<dbReference type="PhylomeDB" id="Q0VDD8"/>
<dbReference type="TreeFam" id="TF342240"/>
<dbReference type="PathwayCommons" id="Q0VDD8"/>
<dbReference type="SignaLink" id="Q0VDD8"/>
<dbReference type="BioGRID-ORCS" id="127602">
    <property type="hits" value="11 hits in 1157 CRISPR screens"/>
</dbReference>
<dbReference type="ChiTaRS" id="DNAH14">
    <property type="organism name" value="human"/>
</dbReference>
<dbReference type="GenomeRNAi" id="127602"/>
<dbReference type="Pharos" id="Q0VDD8">
    <property type="development level" value="Tbio"/>
</dbReference>
<dbReference type="PRO" id="PR:Q0VDD8"/>
<dbReference type="Proteomes" id="UP000005640">
    <property type="component" value="Chromosome 1"/>
</dbReference>
<dbReference type="RNAct" id="Q0VDD8">
    <property type="molecule type" value="protein"/>
</dbReference>
<dbReference type="Bgee" id="ENSG00000185842">
    <property type="expression patterns" value="Expressed in left testis and 106 other cell types or tissues"/>
</dbReference>
<dbReference type="ExpressionAtlas" id="Q0VDD8">
    <property type="expression patterns" value="baseline and differential"/>
</dbReference>
<dbReference type="GO" id="GO:0097729">
    <property type="term" value="C:9+2 motile cilium"/>
    <property type="evidence" value="ECO:0000318"/>
    <property type="project" value="GO_Central"/>
</dbReference>
<dbReference type="GO" id="GO:0005737">
    <property type="term" value="C:cytoplasm"/>
    <property type="evidence" value="ECO:0007669"/>
    <property type="project" value="UniProtKB-KW"/>
</dbReference>
<dbReference type="GO" id="GO:0030286">
    <property type="term" value="C:dynein complex"/>
    <property type="evidence" value="ECO:0000318"/>
    <property type="project" value="GO_Central"/>
</dbReference>
<dbReference type="GO" id="GO:0005874">
    <property type="term" value="C:microtubule"/>
    <property type="evidence" value="ECO:0007669"/>
    <property type="project" value="UniProtKB-KW"/>
</dbReference>
<dbReference type="GO" id="GO:0005524">
    <property type="term" value="F:ATP binding"/>
    <property type="evidence" value="ECO:0007669"/>
    <property type="project" value="UniProtKB-KW"/>
</dbReference>
<dbReference type="GO" id="GO:0045505">
    <property type="term" value="F:dynein intermediate chain binding"/>
    <property type="evidence" value="ECO:0000318"/>
    <property type="project" value="GO_Central"/>
</dbReference>
<dbReference type="GO" id="GO:0051959">
    <property type="term" value="F:dynein light intermediate chain binding"/>
    <property type="evidence" value="ECO:0000318"/>
    <property type="project" value="GO_Central"/>
</dbReference>
<dbReference type="GO" id="GO:0008569">
    <property type="term" value="F:minus-end-directed microtubule motor activity"/>
    <property type="evidence" value="ECO:0000318"/>
    <property type="project" value="GO_Central"/>
</dbReference>
<dbReference type="GO" id="GO:0060294">
    <property type="term" value="P:cilium movement involved in cell motility"/>
    <property type="evidence" value="ECO:0000318"/>
    <property type="project" value="GO_Central"/>
</dbReference>
<dbReference type="FunFam" id="1.10.8.1220:FF:000006">
    <property type="entry name" value="Dynein axonemal heavy chain 14"/>
    <property type="match status" value="1"/>
</dbReference>
<dbReference type="FunFam" id="1.10.8.710:FF:000001">
    <property type="entry name" value="Dynein axonemal heavy chain 2"/>
    <property type="match status" value="1"/>
</dbReference>
<dbReference type="FunFam" id="3.10.490.20:FF:000005">
    <property type="entry name" value="Dynein axonemal heavy chain 6"/>
    <property type="match status" value="1"/>
</dbReference>
<dbReference type="FunFam" id="3.40.50.300:FF:003156">
    <property type="entry name" value="Dynein heavy chain 14, axonemal"/>
    <property type="match status" value="1"/>
</dbReference>
<dbReference type="FunFam" id="3.40.50.300:FF:005613">
    <property type="entry name" value="Dynein heavy chain 14, axonemal"/>
    <property type="match status" value="1"/>
</dbReference>
<dbReference type="FunFam" id="1.20.58.1120:FF:000007">
    <property type="entry name" value="Dynein heavy chain 4"/>
    <property type="match status" value="1"/>
</dbReference>
<dbReference type="FunFam" id="3.40.50.300:FF:000038">
    <property type="entry name" value="Dynein heavy chain 5, axonemal"/>
    <property type="match status" value="1"/>
</dbReference>
<dbReference type="FunFam" id="1.10.472.130:FF:000027">
    <property type="entry name" value="Dynein, axonemal, heavy chain 14"/>
    <property type="match status" value="1"/>
</dbReference>
<dbReference type="FunFam" id="1.20.920.20:FF:000041">
    <property type="entry name" value="Uncharacterized protein"/>
    <property type="match status" value="1"/>
</dbReference>
<dbReference type="Gene3D" id="1.10.472.130">
    <property type="match status" value="1"/>
</dbReference>
<dbReference type="Gene3D" id="1.10.8.1220">
    <property type="match status" value="1"/>
</dbReference>
<dbReference type="Gene3D" id="1.10.8.710">
    <property type="match status" value="1"/>
</dbReference>
<dbReference type="Gene3D" id="1.20.1270.280">
    <property type="match status" value="1"/>
</dbReference>
<dbReference type="Gene3D" id="1.20.58.1120">
    <property type="match status" value="1"/>
</dbReference>
<dbReference type="Gene3D" id="1.20.920.20">
    <property type="match status" value="1"/>
</dbReference>
<dbReference type="Gene3D" id="3.10.490.20">
    <property type="match status" value="1"/>
</dbReference>
<dbReference type="Gene3D" id="6.10.140.1060">
    <property type="match status" value="1"/>
</dbReference>
<dbReference type="Gene3D" id="3.40.50.300">
    <property type="entry name" value="P-loop containing nucleotide triphosphate hydrolases"/>
    <property type="match status" value="6"/>
</dbReference>
<dbReference type="InterPro" id="IPR035699">
    <property type="entry name" value="AAA_6"/>
</dbReference>
<dbReference type="InterPro" id="IPR035706">
    <property type="entry name" value="AAA_9"/>
</dbReference>
<dbReference type="InterPro" id="IPR026983">
    <property type="entry name" value="DHC"/>
</dbReference>
<dbReference type="InterPro" id="IPR043157">
    <property type="entry name" value="Dynein_AAA1S"/>
</dbReference>
<dbReference type="InterPro" id="IPR041466">
    <property type="entry name" value="Dynein_AAA5_ext"/>
</dbReference>
<dbReference type="InterPro" id="IPR041228">
    <property type="entry name" value="Dynein_C"/>
</dbReference>
<dbReference type="InterPro" id="IPR043160">
    <property type="entry name" value="Dynein_C_barrel"/>
</dbReference>
<dbReference type="InterPro" id="IPR024743">
    <property type="entry name" value="Dynein_HC_stalk"/>
</dbReference>
<dbReference type="InterPro" id="IPR024317">
    <property type="entry name" value="Dynein_heavy_chain_D4_dom"/>
</dbReference>
<dbReference type="InterPro" id="IPR027417">
    <property type="entry name" value="P-loop_NTPase"/>
</dbReference>
<dbReference type="PANTHER" id="PTHR22878:SF64">
    <property type="entry name" value="DYNEIN AXONEMAL HEAVY CHAIN 14"/>
    <property type="match status" value="1"/>
</dbReference>
<dbReference type="PANTHER" id="PTHR22878">
    <property type="entry name" value="DYNEIN HEAVY CHAIN 6, AXONEMAL-LIKE-RELATED"/>
    <property type="match status" value="1"/>
</dbReference>
<dbReference type="Pfam" id="PF12774">
    <property type="entry name" value="AAA_6"/>
    <property type="match status" value="2"/>
</dbReference>
<dbReference type="Pfam" id="PF12775">
    <property type="entry name" value="AAA_7"/>
    <property type="match status" value="1"/>
</dbReference>
<dbReference type="Pfam" id="PF12780">
    <property type="entry name" value="AAA_8"/>
    <property type="match status" value="1"/>
</dbReference>
<dbReference type="Pfam" id="PF12781">
    <property type="entry name" value="AAA_9"/>
    <property type="match status" value="2"/>
</dbReference>
<dbReference type="Pfam" id="PF17852">
    <property type="entry name" value="Dynein_AAA_lid"/>
    <property type="match status" value="1"/>
</dbReference>
<dbReference type="Pfam" id="PF18199">
    <property type="entry name" value="Dynein_C"/>
    <property type="match status" value="1"/>
</dbReference>
<dbReference type="Pfam" id="PF12777">
    <property type="entry name" value="MT"/>
    <property type="match status" value="1"/>
</dbReference>
<dbReference type="SUPFAM" id="SSF52540">
    <property type="entry name" value="P-loop containing nucleoside triphosphate hydrolases"/>
    <property type="match status" value="4"/>
</dbReference>
<sequence length="3507" mass="399895">MGRRSQWIWAMRCQMLVPVLSLHIGLARALGCGCIASKIECLIRCNAPFPLLDAVGSVASQELQSLTGTVGVTSGAAAYPRWNLARARAPPHLPGTQDPLRRVRDPTPIVASSPGRRRGSWSGGYGQEASEPGVVGLCCAVLPIHPSLALAGVGGPDLRRFQEGPQRPSDHGAAEKHMETFIPIDLTTENQEMDKEETKTKPRLLRYEEKKYEDVKPLETQPAEIAEKETLEYKTVRTFSESLKSEKTEEPKDDDVIRNIIRLREKLGWQTILPQHSLKYGSSKIAIQKITLKKPLEDDGEFVYCLPRKSPKSLYNPYDLQVVSAHTAKHCKEFWVITASFISKLDSSRTYSLDEFCEEQLQQATQALKQLEDIRNKAISEMKSTFLKVAEKNEIKEYFESKLSEDDTTHFKLPKYRRLLETFFKFVMLVDYIFQELIRQLMNTAVTLLLELFNGSAGMPFSVEKKNENLIRTFKDNSFPTGKTTNDCEELVDNSKLHAISVQKSEVKTDTDINEILNSVEVGKDLRKTYAPIFEVNLCLRIPAESDSSENSKENFHESDQCPEECVMFEDEMSENKDNCVKKHSSEELLPKAKKSKEISYNLEDIISATITPLCQDPQLSIFIDLVSIMDLPNKTGSIIHYKEQTRWPDCHILFETDPAYQNIIVNLLTIIGNSMGLVNAYSHKFIKYCTMTEKAKIMSMKISSMGELTSKEFEAILNRFRNYFRHIVNMAIEKRIGIFNVVVESSLQQLECDPTEIEEFLEHFIFLNAISSKISKLEKEFLTMSQLYSVAKHHQIHISEEQIAIFQVLLLKFSQLKSSMKLSKINKDTAITKFRDNLEACISGLHVDVGNLKAKIRTPLLLCAGTQVSTAMEMIQTLSGEAASLTNKAKAYSHYQDCFSDSQSHMHSVNVEEITQIVLSEISDIEGDLTLRKKLWEAQEEWKRASWEWRNSSLQSIDVESVQRNVSKLMHIISVLEKEIYSIFIIPSIDDISAQLEESQVILATIKGSPHIGPIKSQIMFYNDCVKSFVSSYSREKLEKVHAGLMCHLEEVADLVVLDTSNSRTKAILGALLILYVHCRDIVINLLLKNIFNAEDFEWTRHLQYKWNEKQKLCYVSQGNASFTYGYEYLGCTSRLVITPLTDRCWLTLMEALHLNLGGCPAGPAGTGKTETVKDLAKCALFAFKCNTALIKLPNSLIVLTCFGLEKTVLVMNTVMSFRFVLEGKEIRINMSCAVFITMNPRYGGGVELPDNLKSLFRPVAMMVPHYQMIAEIILFSFGFKSANSLSGKLTNLYELARKQLSQQDHYNFGLRSLKIVLIMAGTKKREFKCDTSDSLSEADETLIVIEAIREASLPKCPPEDVPLFENIIGDIFPEVTVLKVNQLALEKVIYTATQQLGLQNWSSQKEKIIQFYNQLQVCVGVMLVGPTGGGKTTVRRILEKALTLLPIADFLSVAERKSASKISERKGKVDICVLNPKCVTLSELYGQLDPNTMEWTDGLLSATIRSYVYFNTPKNTKKDIDLRLKSRISDLSNVFKLDSSDTTETDDNIFEEIEKVVKIPENHNFDWQWIILDGPVDTFWVENLNSVLDDTRTLCLANSERIALTNKIRVIFEVDNLSQASPATVSRCAMVYMDPVDLGWEPYVKSWLLKTSKIISQSGVDCLEFMIKNSVTDGLQFIRNRQKFQPYPMEDITVVITLCRILDAFFDFMGKNGGFEQSDDLNDTSSKEANSQRESVTFKDIEKRDENTWYPEKNPDKLTKIIQKLFVFAFTWAFGGALNREDEHRENIPFCPSLEPDSLAKVTYDFDKLVHELFGNSSQVGINLPTGECSIFGYFVDIEQCEFIPWSDLVPNDQTLIQRDNPTKKPEVRTNKKLLKNNDHKGVVVSTINFSTNVTAAKTKEMILKKLIRRTKDTLGAPKNNRILIFIDDMNMPVSDMYGAQPPLELIRQLLDLGGVYDTEKNTWKNIQDLSIVAACVPVVNDISPRLLKHFSMLVLPHPSQDILCTIFQIGIDGCGKKTCATLACYLTDNKLYRVPISHKCAYIEFKEVFKKVFIHAGLKGKPTVLMVPNLNIEQDSFLEDLNYIISSGRIPDLFENVELDSIAMKIRYLTEQSGHMDNRQSLLSFFQKRIYKNLHIFVIMSPEGPSFRQNCRVYPSMISSCTIDWYERWPEEALLIVANSFLKEKVNFENRENLKEKLAPTCVQIHKSMKDLNRKYFEETGRFYYTTPNSYLQFMETFAHILRAREEEMQTKRDRFHMGLSTILEATTLVTEMQEELLILGPQVEQKTKETETLMEKLRKDSQVVEKVQMLVKQDEEIVAEEVRIVEDYAQKTANELKSVLPAFDKAIVALNALDKADVAELRVYTRPPFLVLTVMNAVCILLQKKPNWATAKLLLSETGFLKKLINLDKDSIPDKVFVKLKKIVTLPDFNPHKISLVSVACCSLCQWVIALNNYHEVQKVVGPKQIQVAEAQNVLKIARQRLAEKQRGLQLISRWHNQGLPHGQYSVENAILIKNGQQWPLLIDPHRQAHKWIRQMEGSRLQKLSIEDSNYTKKIENAMKTGGSVLLQSCQASTWRKKLYLSTEIDNPHFLPSVYNFVTMINFTVTFQGLQDQLLSTVVTHEVPHLEDQRSKLLESISLDAITLEELEEKTLNLLQKALGSILDDDKIVDTLRKSKMTSNEISKRIEATKKAESEIQAIRKNYLPIATRGALLYFLVADLTQINYMYQFSLDWFHQVFVSSVVSKSKEQEHSFKREKVSPKEVHEFISISKEPNLENEKNLLDKHIKSAIDMLTKSIFKVVSSALFNEDKLCFSFRLCTVIMQNNANGNLIQDDIGFLPEEEWNIFLYSGILINIKSALSQSRLTSTFEIGESQHLQWLSDSRWRQCQYVSTHLEPFSLLCKSLLSNVSQWDTFKNSKAVYSLISTPFSSENASLEENTKPPEEKHTFCLLLRAINHTGTDLGPVGRGQWLTSTACDRHTDVCSFSFALNDGVPDVEHVQDIFYGHCVDKYHVKVLRPESLNNSVRKFITEKMGNKYLQRTGVNLKDAYKGSNARTPLILIQTHGSASIKDYIHIIQSLPDDDLPEVLGIHPEAIRSCWETQGEKFIENLIAMQPKTTTANLMIRPEQSKDELVMEILSDLLKRLPLTVEKEEIAVGTPSTLKSMMSSSIWESLSKNLKDHDPLIHCVLLTFLKQEIKRFDKLLFVIHKSLKDLQLAIKGEIILTQELEEIFNSFLNMRVPTLWQKHAYRSCKPLSSWIDDLIQRLNFFNTWAKVAYTAIQRRYMRFVTVWKQSIPSTSQKCKHPEDSENNFFEGFPSRYWLPAFFFPQAFLAAVLQDYGRSRGIAVDALTFTHHVISNTTDKDEKFSVFMPKKLNIVRRAFKGSASSHTGVYIFGLFIEGARWNREQKILEDSLPLEMCCDFPDIYFLPTKISTKTPNASNQTDSELYAFECPVYQTPERSRILATTGLPTNFLTSVYLSTKKPPSHWITMRVALLCEKNEK</sequence>
<proteinExistence type="evidence at protein level"/>
<comment type="function">
    <text evidence="1">Force generating protein of respiratory cilia. Produces force towards the minus ends of microtubules. Dynein has ATPase activity; the force-producing power stroke is thought to occur on release of ADP. Involved in sperm motility; implicated in sperm flagellar assembly (By similarity).</text>
</comment>
<comment type="subunit">
    <text>Consists of at least two heavy chains and a number of intermediate and light chains.</text>
</comment>
<comment type="subcellular location">
    <subcellularLocation>
        <location evidence="6">Cytoplasm</location>
        <location evidence="6">Cytoskeleton</location>
        <location evidence="6">Cilium axoneme</location>
    </subcellularLocation>
</comment>
<comment type="alternative products">
    <event type="alternative splicing"/>
    <isoform>
        <id>Q0VDD8-1</id>
        <name>1</name>
        <sequence type="displayed"/>
    </isoform>
    <isoform>
        <id>Q0VDD8-2</id>
        <name>2</name>
        <sequence type="described" ref="VSP_031314 VSP_031315 VSP_031316 VSP_031317"/>
    </isoform>
    <isoform>
        <id>Q0VDD8-3</id>
        <name>3</name>
        <sequence type="described" ref="VSP_031314 VSP_031315 VSP_038241 VSP_038242"/>
    </isoform>
    <isoform>
        <id>Q0VDD8-4</id>
        <name>4</name>
        <sequence type="described" ref="VSP_031314 VSP_031315 VSP_031316 VSP_038243 VSP_038244 VSP_038245 VSP_038246 VSP_038247 VSP_038248 VSP_038249 VSP_038250 VSP_038251 VSP_038252 VSP_038253 VSP_038254 VSP_038255"/>
    </isoform>
</comment>
<comment type="domain">
    <text evidence="1">Dynein heavy chains probably consist of an N-terminal stem (which binds cargo and interacts with other dynein components), and the head or motor domain. The motor contains six tandemly-linked AAA domains in the head, which form a ring. A stalk-like structure (formed by two of the coiled coil domains) protrudes between AAA 4 and AAA 5 and terminates in a microtubule-binding site. A seventh domain may also contribute to this ring; it is not clear whether the N-terminus or the C-terminus forms this extra domain. There are four well-conserved and two non-conserved ATPase sites, one per AAA domain. Probably only one of these (within AAA 1) actually hydrolyzes ATP, the others may serve a regulatory function (By similarity).</text>
</comment>
<comment type="similarity">
    <text evidence="6">Belongs to the dynein heavy chain family.</text>
</comment>
<comment type="sequence caution" evidence="6">
    <conflict type="erroneous initiation">
        <sequence resource="EMBL-CDS" id="AAI19717"/>
    </conflict>
</comment>
<comment type="sequence caution" evidence="6">
    <conflict type="erroneous initiation">
        <sequence resource="EMBL-CDS" id="AAI19718"/>
    </conflict>
</comment>
<comment type="sequence caution" evidence="6">
    <conflict type="erroneous gene model prediction">
        <sequence resource="EMBL-CDS" id="EAW69735"/>
    </conflict>
</comment>
<feature type="chain" id="PRO_0000286560" description="Dynein axonemal heavy chain 14">
    <location>
        <begin position="1"/>
        <end position="3507"/>
    </location>
</feature>
<feature type="region of interest" description="Disordered" evidence="3">
    <location>
        <begin position="91"/>
        <end position="126"/>
    </location>
</feature>
<feature type="coiled-coil region" evidence="2">
    <location>
        <begin position="354"/>
        <end position="381"/>
    </location>
</feature>
<feature type="short sequence motif" description="GPAGTGKT motif" evidence="1">
    <location>
        <begin position="1164"/>
        <end position="1171"/>
    </location>
</feature>
<feature type="binding site" evidence="2">
    <location>
        <begin position="1164"/>
        <end position="1171"/>
    </location>
    <ligand>
        <name>ATP</name>
        <dbReference type="ChEBI" id="CHEBI:30616"/>
    </ligand>
</feature>
<feature type="binding site" evidence="2">
    <location>
        <begin position="1427"/>
        <end position="1434"/>
    </location>
    <ligand>
        <name>ATP</name>
        <dbReference type="ChEBI" id="CHEBI:30616"/>
    </ligand>
</feature>
<feature type="glycosylation site" description="N-linked (GlcNAc...) asparagine" evidence="2">
    <location>
        <position position="1818"/>
    </location>
</feature>
<feature type="splice variant" id="VSP_031314" description="In isoform 2, isoform 3 and isoform 4." evidence="5">
    <location>
        <begin position="1"/>
        <end position="177"/>
    </location>
</feature>
<feature type="splice variant" id="VSP_031315" description="In isoform 2, isoform 3 and isoform 4." evidence="5">
    <original>E</original>
    <variation>EDYLRESIIQQHMVSPEPASLKEKGKSRRKKDQTHACPNVRKARPVSYDRT</variation>
    <location>
        <position position="249"/>
    </location>
</feature>
<feature type="splice variant" id="VSP_031316" description="In isoform 2 and isoform 4." evidence="5">
    <original>K</original>
    <variation>KVINIVGSVKEVELIPTLEWLSERRHYYLLRQFKIFSDFRMNKAFVTWKLNVKRIKTEKSRSFLYHHLFLADDLFQTCLVYIRGLCEDAINLKNYNDHENNLSAICLVK</variation>
    <location>
        <position position="344"/>
    </location>
</feature>
<feature type="splice variant" id="VSP_038241" description="In isoform 3." evidence="6">
    <original>LDSSRTYSLDE</original>
    <variation>RYLVICGAVYI</variation>
    <location>
        <begin position="345"/>
        <end position="355"/>
    </location>
</feature>
<feature type="splice variant" id="VSP_038242" description="In isoform 3." evidence="6">
    <location>
        <begin position="356"/>
        <end position="3507"/>
    </location>
</feature>
<feature type="splice variant" id="VSP_031317" description="In isoform 2." evidence="5">
    <location>
        <begin position="473"/>
        <end position="3507"/>
    </location>
</feature>
<feature type="splice variant" id="VSP_038243" description="In isoform 4." evidence="6">
    <original>A</original>
    <variation>DTEIETEFENKYMYYEFPEFPTNLFIDPNRLEFSVKIQNMLTNMEKCIT</variation>
    <location>
        <position position="609"/>
    </location>
</feature>
<feature type="splice variant" id="VSP_038244" description="In isoform 4." evidence="6">
    <original>V</original>
    <variation>SLDYQSECLLYIDNVIHMSHTLIQSVIEKKNKNLLEVV</variation>
    <location>
        <position position="744"/>
    </location>
</feature>
<feature type="splice variant" id="VSP_038245" description="In isoform 4." evidence="6">
    <original>K</original>
    <variation>KGLPKSDMVTHLKQVVTEFKQELPIIIALGNPCLKPRHWEALQEIIGKSVPLDKNCKVENLLALKMFQYENEINDMSTSATNEAALEKMLFKIIDFWNTTPLPLILHHT</variation>
    <location>
        <position position="979"/>
    </location>
</feature>
<feature type="splice variant" id="VSP_038246" description="In isoform 4." evidence="6">
    <original>K</original>
    <variation>KDLVNEWDQNLTLFSYTLEEWMNCQRNWLYLEPVFHSSEIRRQLPAETELFSQVISMWKKIMSKIQNKQNALQITTSAGVLEILQNCNIHLEHIKKSLEDYLEVKRLIFPRFYFLSNAELLDILADSRNPESVQPHLVKCFENIKQLLIWKQDIGPPAVKMLISAEGEGLVLPKKIRVRSAVEQWLVNVEKSMFDVLKKERYIYNIILLFQ</variation>
    <location>
        <position position="1017"/>
    </location>
</feature>
<feature type="splice variant" id="VSP_038247" description="In isoform 4." evidence="6">
    <original>CALFAFKCNTALIKLPNSLIVLTCFGLEKTVLVMNTVMSF</original>
    <variation>SLGKHCVVFNCFEDLDYKIVRKFFFGLVQSGAWSCFDEFNLIDLEVLSVIASQILTIKAAKDNYSA</variation>
    <location>
        <begin position="1180"/>
        <end position="1219"/>
    </location>
</feature>
<feature type="splice variant" id="VSP_038248" description="In isoform 4." evidence="6">
    <location>
        <begin position="1332"/>
        <end position="1336"/>
    </location>
</feature>
<feature type="splice variant" id="VSP_038249" description="In isoform 4." evidence="6">
    <original>G</original>
    <variation>GWKHWGQSQGRRRKGNC</variation>
    <location>
        <position position="1823"/>
    </location>
</feature>
<feature type="splice variant" id="VSP_038250" description="In isoform 4." evidence="6">
    <original>R</original>
    <variation>RGTSLLTNLQRSGGNFLKITECGECINYTATRDTTCLSFLMSLLLKNSCPVLLTGESGVGKTAAINQMLEKLEGPGAFDIKHGSILGDTLLYSEIKKSSSLKQNITILIPETHKTATGSS</variation>
    <location>
        <position position="1861"/>
    </location>
</feature>
<feature type="splice variant" id="VSP_038251" description="In isoform 4." evidence="6">
    <original>Q</original>
    <variation>QAHLGIYFSINNFTPEVQKSKDQIISCSLAIYHQVRQNMLPTPTKCHYMFNLRDMFKLLLGLLQADRTVVNSKEMAALLFVHEATRVFHDRLIDFTDKSLFYRLLSRELENCFQ</variation>
    <location>
        <position position="2011"/>
    </location>
</feature>
<feature type="splice variant" id="VSP_038252" description="In isoform 4." evidence="6">
    <original>L</original>
    <variation>LVEEHLLFLQAAYKDTVAEKQLLANRKTMASRRFQCASVLLTVLEDEKTRWQETINQIDNKLEGILGDILLSAACIVYSGILTPEFRQLIVNKWETFCIENGISLSSKFSLIKVMAQKYE</variation>
    <location>
        <position position="2495"/>
    </location>
</feature>
<feature type="splice variant" id="VSP_038253" description="In isoform 4." evidence="6">
    <original>SCQASTWRKK</original>
    <variation>NLLETLAPGLKAILKKDIYQKKGHYFIRVGDAEFEYNSNFR</variation>
    <location>
        <begin position="2573"/>
        <end position="2582"/>
    </location>
</feature>
<feature type="splice variant" id="VSP_038254" description="In isoform 4." evidence="6">
    <original>KHTFCLLLRAINHTGTDLGPVGRGQWLTSTACDRHTDVCSFSFALNDGVPDVEHVQDIFYGHCVDKYH</original>
    <variation>TELLNENKETCNPINFPWEKLTSFQRLIL</variation>
    <location>
        <begin position="2949"/>
        <end position="3016"/>
    </location>
</feature>
<feature type="splice variant" id="VSP_038255" description="In isoform 4." evidence="6">
    <original>G</original>
    <variation>GIDLTNILLRFAQELKGTTHHVTIISLGRDQAAKAEDLILKALTKTQQWVFLQNCHLATSFMPRLCTIVESFNSPNVTIDPEFRLWLSSKSYSSFPIPVLKKGLKIAVESPQGLKSNLLQTFGCTGSGEVTEEIFENPDCGQWWKKLLFSLCFFNAVINERKNYGILGWNIAYKFNSSDLGVAIKVLENSLRGQPSISWQALRYLIGEVIYGGRVIDNWDKRCLKTLLYKFCNPEVLKDDFSFSR</variation>
    <location>
        <position position="3069"/>
    </location>
</feature>
<feature type="sequence variant" id="VAR_032116" description="In dbSNP:rs41267347." evidence="4">
    <original>T</original>
    <variation>S</variation>
    <location>
        <position position="220"/>
    </location>
</feature>
<feature type="sequence variant" id="VAR_032117" description="In dbSNP:rs41267349." evidence="4">
    <original>P</original>
    <variation>L</variation>
    <location>
        <position position="274"/>
    </location>
</feature>
<feature type="sequence variant" id="VAR_057764" description="In dbSNP:rs6667999.">
    <original>K</original>
    <variation>E</variation>
    <location>
        <position position="2671"/>
    </location>
</feature>
<feature type="sequence conflict" description="In Ref. 3; AAI19718." evidence="6" ref="3">
    <original>F</original>
    <variation>L</variation>
    <location>
        <position position="424"/>
    </location>
</feature>
<organism>
    <name type="scientific">Homo sapiens</name>
    <name type="common">Human</name>
    <dbReference type="NCBI Taxonomy" id="9606"/>
    <lineage>
        <taxon>Eukaryota</taxon>
        <taxon>Metazoa</taxon>
        <taxon>Chordata</taxon>
        <taxon>Craniata</taxon>
        <taxon>Vertebrata</taxon>
        <taxon>Euteleostomi</taxon>
        <taxon>Mammalia</taxon>
        <taxon>Eutheria</taxon>
        <taxon>Euarchontoglires</taxon>
        <taxon>Primates</taxon>
        <taxon>Haplorrhini</taxon>
        <taxon>Catarrhini</taxon>
        <taxon>Hominidae</taxon>
        <taxon>Homo</taxon>
    </lineage>
</organism>
<evidence type="ECO:0000250" key="1"/>
<evidence type="ECO:0000255" key="2"/>
<evidence type="ECO:0000256" key="3">
    <source>
        <dbReference type="SAM" id="MobiDB-lite"/>
    </source>
</evidence>
<evidence type="ECO:0000269" key="4">
    <source>
    </source>
</evidence>
<evidence type="ECO:0000303" key="5">
    <source>
    </source>
</evidence>
<evidence type="ECO:0000305" key="6"/>
<keyword id="KW-0025">Alternative splicing</keyword>
<keyword id="KW-0067">ATP-binding</keyword>
<keyword id="KW-0966">Cell projection</keyword>
<keyword id="KW-0969">Cilium</keyword>
<keyword id="KW-0175">Coiled coil</keyword>
<keyword id="KW-0963">Cytoplasm</keyword>
<keyword id="KW-0206">Cytoskeleton</keyword>
<keyword id="KW-0243">Dynein</keyword>
<keyword id="KW-0325">Glycoprotein</keyword>
<keyword id="KW-0493">Microtubule</keyword>
<keyword id="KW-0505">Motor protein</keyword>
<keyword id="KW-0547">Nucleotide-binding</keyword>
<keyword id="KW-1267">Proteomics identification</keyword>
<keyword id="KW-1185">Reference proteome</keyword>
<protein>
    <recommendedName>
        <fullName>Dynein axonemal heavy chain 14</fullName>
    </recommendedName>
    <alternativeName>
        <fullName>Axonemal beta dynein heavy chain 14</fullName>
    </alternativeName>
    <alternativeName>
        <fullName>Ciliary dynein heavy chain 14</fullName>
    </alternativeName>
</protein>
<reference key="1">
    <citation type="journal article" date="2006" name="Nature">
        <title>The DNA sequence and biological annotation of human chromosome 1.</title>
        <authorList>
            <person name="Gregory S.G."/>
            <person name="Barlow K.F."/>
            <person name="McLay K.E."/>
            <person name="Kaul R."/>
            <person name="Swarbreck D."/>
            <person name="Dunham A."/>
            <person name="Scott C.E."/>
            <person name="Howe K.L."/>
            <person name="Woodfine K."/>
            <person name="Spencer C.C.A."/>
            <person name="Jones M.C."/>
            <person name="Gillson C."/>
            <person name="Searle S."/>
            <person name="Zhou Y."/>
            <person name="Kokocinski F."/>
            <person name="McDonald L."/>
            <person name="Evans R."/>
            <person name="Phillips K."/>
            <person name="Atkinson A."/>
            <person name="Cooper R."/>
            <person name="Jones C."/>
            <person name="Hall R.E."/>
            <person name="Andrews T.D."/>
            <person name="Lloyd C."/>
            <person name="Ainscough R."/>
            <person name="Almeida J.P."/>
            <person name="Ambrose K.D."/>
            <person name="Anderson F."/>
            <person name="Andrew R.W."/>
            <person name="Ashwell R.I.S."/>
            <person name="Aubin K."/>
            <person name="Babbage A.K."/>
            <person name="Bagguley C.L."/>
            <person name="Bailey J."/>
            <person name="Beasley H."/>
            <person name="Bethel G."/>
            <person name="Bird C.P."/>
            <person name="Bray-Allen S."/>
            <person name="Brown J.Y."/>
            <person name="Brown A.J."/>
            <person name="Buckley D."/>
            <person name="Burton J."/>
            <person name="Bye J."/>
            <person name="Carder C."/>
            <person name="Chapman J.C."/>
            <person name="Clark S.Y."/>
            <person name="Clarke G."/>
            <person name="Clee C."/>
            <person name="Cobley V."/>
            <person name="Collier R.E."/>
            <person name="Corby N."/>
            <person name="Coville G.J."/>
            <person name="Davies J."/>
            <person name="Deadman R."/>
            <person name="Dunn M."/>
            <person name="Earthrowl M."/>
            <person name="Ellington A.G."/>
            <person name="Errington H."/>
            <person name="Frankish A."/>
            <person name="Frankland J."/>
            <person name="French L."/>
            <person name="Garner P."/>
            <person name="Garnett J."/>
            <person name="Gay L."/>
            <person name="Ghori M.R.J."/>
            <person name="Gibson R."/>
            <person name="Gilby L.M."/>
            <person name="Gillett W."/>
            <person name="Glithero R.J."/>
            <person name="Grafham D.V."/>
            <person name="Griffiths C."/>
            <person name="Griffiths-Jones S."/>
            <person name="Grocock R."/>
            <person name="Hammond S."/>
            <person name="Harrison E.S.I."/>
            <person name="Hart E."/>
            <person name="Haugen E."/>
            <person name="Heath P.D."/>
            <person name="Holmes S."/>
            <person name="Holt K."/>
            <person name="Howden P.J."/>
            <person name="Hunt A.R."/>
            <person name="Hunt S.E."/>
            <person name="Hunter G."/>
            <person name="Isherwood J."/>
            <person name="James R."/>
            <person name="Johnson C."/>
            <person name="Johnson D."/>
            <person name="Joy A."/>
            <person name="Kay M."/>
            <person name="Kershaw J.K."/>
            <person name="Kibukawa M."/>
            <person name="Kimberley A.M."/>
            <person name="King A."/>
            <person name="Knights A.J."/>
            <person name="Lad H."/>
            <person name="Laird G."/>
            <person name="Lawlor S."/>
            <person name="Leongamornlert D.A."/>
            <person name="Lloyd D.M."/>
            <person name="Loveland J."/>
            <person name="Lovell J."/>
            <person name="Lush M.J."/>
            <person name="Lyne R."/>
            <person name="Martin S."/>
            <person name="Mashreghi-Mohammadi M."/>
            <person name="Matthews L."/>
            <person name="Matthews N.S.W."/>
            <person name="McLaren S."/>
            <person name="Milne S."/>
            <person name="Mistry S."/>
            <person name="Moore M.J.F."/>
            <person name="Nickerson T."/>
            <person name="O'Dell C.N."/>
            <person name="Oliver K."/>
            <person name="Palmeiri A."/>
            <person name="Palmer S.A."/>
            <person name="Parker A."/>
            <person name="Patel D."/>
            <person name="Pearce A.V."/>
            <person name="Peck A.I."/>
            <person name="Pelan S."/>
            <person name="Phelps K."/>
            <person name="Phillimore B.J."/>
            <person name="Plumb R."/>
            <person name="Rajan J."/>
            <person name="Raymond C."/>
            <person name="Rouse G."/>
            <person name="Saenphimmachak C."/>
            <person name="Sehra H.K."/>
            <person name="Sheridan E."/>
            <person name="Shownkeen R."/>
            <person name="Sims S."/>
            <person name="Skuce C.D."/>
            <person name="Smith M."/>
            <person name="Steward C."/>
            <person name="Subramanian S."/>
            <person name="Sycamore N."/>
            <person name="Tracey A."/>
            <person name="Tromans A."/>
            <person name="Van Helmond Z."/>
            <person name="Wall M."/>
            <person name="Wallis J.M."/>
            <person name="White S."/>
            <person name="Whitehead S.L."/>
            <person name="Wilkinson J.E."/>
            <person name="Willey D.L."/>
            <person name="Williams H."/>
            <person name="Wilming L."/>
            <person name="Wray P.W."/>
            <person name="Wu Z."/>
            <person name="Coulson A."/>
            <person name="Vaudin M."/>
            <person name="Sulston J.E."/>
            <person name="Durbin R.M."/>
            <person name="Hubbard T."/>
            <person name="Wooster R."/>
            <person name="Dunham I."/>
            <person name="Carter N.P."/>
            <person name="McVean G."/>
            <person name="Ross M.T."/>
            <person name="Harrow J."/>
            <person name="Olson M.V."/>
            <person name="Beck S."/>
            <person name="Rogers J."/>
            <person name="Bentley D.R."/>
        </authorList>
    </citation>
    <scope>NUCLEOTIDE SEQUENCE [LARGE SCALE GENOMIC DNA]</scope>
</reference>
<reference key="2">
    <citation type="submission" date="2005-07" db="EMBL/GenBank/DDBJ databases">
        <authorList>
            <person name="Mural R.J."/>
            <person name="Istrail S."/>
            <person name="Sutton G.G."/>
            <person name="Florea L."/>
            <person name="Halpern A.L."/>
            <person name="Mobarry C.M."/>
            <person name="Lippert R."/>
            <person name="Walenz B."/>
            <person name="Shatkay H."/>
            <person name="Dew I."/>
            <person name="Miller J.R."/>
            <person name="Flanigan M.J."/>
            <person name="Edwards N.J."/>
            <person name="Bolanos R."/>
            <person name="Fasulo D."/>
            <person name="Halldorsson B.V."/>
            <person name="Hannenhalli S."/>
            <person name="Turner R."/>
            <person name="Yooseph S."/>
            <person name="Lu F."/>
            <person name="Nusskern D.R."/>
            <person name="Shue B.C."/>
            <person name="Zheng X.H."/>
            <person name="Zhong F."/>
            <person name="Delcher A.L."/>
            <person name="Huson D.H."/>
            <person name="Kravitz S.A."/>
            <person name="Mouchard L."/>
            <person name="Reinert K."/>
            <person name="Remington K.A."/>
            <person name="Clark A.G."/>
            <person name="Waterman M.S."/>
            <person name="Eichler E.E."/>
            <person name="Adams M.D."/>
            <person name="Hunkapiller M.W."/>
            <person name="Myers E.W."/>
            <person name="Venter J.C."/>
        </authorList>
    </citation>
    <scope>NUCLEOTIDE SEQUENCE [LARGE SCALE GENOMIC DNA]</scope>
</reference>
<reference key="3">
    <citation type="journal article" date="2004" name="Genome Res.">
        <title>The status, quality, and expansion of the NIH full-length cDNA project: the Mammalian Gene Collection (MGC).</title>
        <authorList>
            <consortium name="The MGC Project Team"/>
        </authorList>
    </citation>
    <scope>NUCLEOTIDE SEQUENCE [LARGE SCALE MRNA] (ISOFORM 2)</scope>
    <scope>VARIANTS SER-220 AND LEU-274</scope>
</reference>
<gene>
    <name type="primary">DNAH14</name>
    <name type="synonym">C1orf67</name>
</gene>
<accession>Q0VDD8</accession>
<accession>A6NG62</accession>
<accession>A6NNL2</accession>
<accession>Q0VDD9</accession>
<accession>Q4VXC7</accession>
<accession>Q4VXG4</accession>
<accession>Q4VXG5</accession>
<accession>Q5VU33</accession>
<accession>Q5VU34</accession>
<name>DYH14_HUMAN</name>